<sequence length="299" mass="34001">MTFKSGFVAILGRPNVGKSTFLNHVMGQXIAIMXDKAXTTRNKIMGIYTTDKEQIVFIDTPGIHKPKTALGDFMVESAYSTLREVDTVLFMVPADEARGKGDDMIIERLKAAKVPVILVVNKIDKVHPDQLLSQIDDFRNQMDFKEIVPISALQGNNVSRLVDILSENLDEGFQYFPSDQITDHPERFLVSEMVREKVLHLTREEIPHSVAVVVDSMKRDEETDKVHIRATIMVERDSQKGIIIGKGGAMLKKIGSMARRDIELMLGDKVFLETWVKVKKNWRDKKLDLADFGYNEREY</sequence>
<accession>B5E488</accession>
<dbReference type="EMBL" id="CP001015">
    <property type="protein sequence ID" value="ACF55716.1"/>
    <property type="molecule type" value="Genomic_DNA"/>
</dbReference>
<dbReference type="KEGG" id="spx:SPG_0893"/>
<dbReference type="HOGENOM" id="CLU_038009_1_0_9"/>
<dbReference type="GO" id="GO:0005829">
    <property type="term" value="C:cytosol"/>
    <property type="evidence" value="ECO:0007669"/>
    <property type="project" value="TreeGrafter"/>
</dbReference>
<dbReference type="GO" id="GO:0005886">
    <property type="term" value="C:plasma membrane"/>
    <property type="evidence" value="ECO:0007669"/>
    <property type="project" value="UniProtKB-SubCell"/>
</dbReference>
<dbReference type="GO" id="GO:0005525">
    <property type="term" value="F:GTP binding"/>
    <property type="evidence" value="ECO:0007669"/>
    <property type="project" value="UniProtKB-UniRule"/>
</dbReference>
<dbReference type="GO" id="GO:0003924">
    <property type="term" value="F:GTPase activity"/>
    <property type="evidence" value="ECO:0007669"/>
    <property type="project" value="UniProtKB-UniRule"/>
</dbReference>
<dbReference type="GO" id="GO:0043024">
    <property type="term" value="F:ribosomal small subunit binding"/>
    <property type="evidence" value="ECO:0007669"/>
    <property type="project" value="TreeGrafter"/>
</dbReference>
<dbReference type="GO" id="GO:0070181">
    <property type="term" value="F:small ribosomal subunit rRNA binding"/>
    <property type="evidence" value="ECO:0007669"/>
    <property type="project" value="UniProtKB-UniRule"/>
</dbReference>
<dbReference type="GO" id="GO:0000028">
    <property type="term" value="P:ribosomal small subunit assembly"/>
    <property type="evidence" value="ECO:0007669"/>
    <property type="project" value="TreeGrafter"/>
</dbReference>
<dbReference type="CDD" id="cd04163">
    <property type="entry name" value="Era"/>
    <property type="match status" value="1"/>
</dbReference>
<dbReference type="CDD" id="cd22534">
    <property type="entry name" value="KH-II_Era"/>
    <property type="match status" value="1"/>
</dbReference>
<dbReference type="FunFam" id="3.30.300.20:FF:000003">
    <property type="entry name" value="GTPase Era"/>
    <property type="match status" value="1"/>
</dbReference>
<dbReference type="FunFam" id="3.40.50.300:FF:000094">
    <property type="entry name" value="GTPase Era"/>
    <property type="match status" value="1"/>
</dbReference>
<dbReference type="Gene3D" id="3.30.300.20">
    <property type="match status" value="1"/>
</dbReference>
<dbReference type="Gene3D" id="3.40.50.300">
    <property type="entry name" value="P-loop containing nucleotide triphosphate hydrolases"/>
    <property type="match status" value="1"/>
</dbReference>
<dbReference type="HAMAP" id="MF_00367">
    <property type="entry name" value="GTPase_Era"/>
    <property type="match status" value="1"/>
</dbReference>
<dbReference type="InterPro" id="IPR030388">
    <property type="entry name" value="G_ERA_dom"/>
</dbReference>
<dbReference type="InterPro" id="IPR006073">
    <property type="entry name" value="GTP-bd"/>
</dbReference>
<dbReference type="InterPro" id="IPR005662">
    <property type="entry name" value="GTPase_Era-like"/>
</dbReference>
<dbReference type="InterPro" id="IPR015946">
    <property type="entry name" value="KH_dom-like_a/b"/>
</dbReference>
<dbReference type="InterPro" id="IPR004044">
    <property type="entry name" value="KH_dom_type_2"/>
</dbReference>
<dbReference type="InterPro" id="IPR009019">
    <property type="entry name" value="KH_sf_prok-type"/>
</dbReference>
<dbReference type="InterPro" id="IPR027417">
    <property type="entry name" value="P-loop_NTPase"/>
</dbReference>
<dbReference type="InterPro" id="IPR005225">
    <property type="entry name" value="Small_GTP-bd"/>
</dbReference>
<dbReference type="NCBIfam" id="TIGR00436">
    <property type="entry name" value="era"/>
    <property type="match status" value="1"/>
</dbReference>
<dbReference type="NCBIfam" id="NF000908">
    <property type="entry name" value="PRK00089.1"/>
    <property type="match status" value="1"/>
</dbReference>
<dbReference type="NCBIfam" id="TIGR00231">
    <property type="entry name" value="small_GTP"/>
    <property type="match status" value="1"/>
</dbReference>
<dbReference type="PANTHER" id="PTHR42698">
    <property type="entry name" value="GTPASE ERA"/>
    <property type="match status" value="1"/>
</dbReference>
<dbReference type="PANTHER" id="PTHR42698:SF1">
    <property type="entry name" value="GTPASE ERA, MITOCHONDRIAL"/>
    <property type="match status" value="1"/>
</dbReference>
<dbReference type="Pfam" id="PF07650">
    <property type="entry name" value="KH_2"/>
    <property type="match status" value="1"/>
</dbReference>
<dbReference type="Pfam" id="PF01926">
    <property type="entry name" value="MMR_HSR1"/>
    <property type="match status" value="1"/>
</dbReference>
<dbReference type="SUPFAM" id="SSF52540">
    <property type="entry name" value="P-loop containing nucleoside triphosphate hydrolases"/>
    <property type="match status" value="1"/>
</dbReference>
<dbReference type="SUPFAM" id="SSF54814">
    <property type="entry name" value="Prokaryotic type KH domain (KH-domain type II)"/>
    <property type="match status" value="1"/>
</dbReference>
<dbReference type="PROSITE" id="PS51713">
    <property type="entry name" value="G_ERA"/>
    <property type="match status" value="1"/>
</dbReference>
<dbReference type="PROSITE" id="PS50823">
    <property type="entry name" value="KH_TYPE_2"/>
    <property type="match status" value="1"/>
</dbReference>
<feature type="chain" id="PRO_1000121359" description="GTPase Era">
    <location>
        <begin position="1"/>
        <end position="299"/>
    </location>
</feature>
<feature type="domain" description="Era-type G" evidence="2">
    <location>
        <begin position="4"/>
        <end position="171"/>
    </location>
</feature>
<feature type="domain" description="KH type-2" evidence="1">
    <location>
        <begin position="202"/>
        <end position="280"/>
    </location>
</feature>
<feature type="region of interest" description="G1" evidence="2">
    <location>
        <begin position="12"/>
        <end position="19"/>
    </location>
</feature>
<feature type="region of interest" description="G2" evidence="2">
    <location>
        <begin position="38"/>
        <end position="42"/>
    </location>
</feature>
<feature type="region of interest" description="G3" evidence="2">
    <location>
        <begin position="59"/>
        <end position="62"/>
    </location>
</feature>
<feature type="region of interest" description="G4" evidence="2">
    <location>
        <begin position="121"/>
        <end position="124"/>
    </location>
</feature>
<feature type="region of interest" description="G5" evidence="2">
    <location>
        <begin position="150"/>
        <end position="152"/>
    </location>
</feature>
<feature type="binding site" evidence="1">
    <location>
        <begin position="12"/>
        <end position="19"/>
    </location>
    <ligand>
        <name>GTP</name>
        <dbReference type="ChEBI" id="CHEBI:37565"/>
    </ligand>
</feature>
<feature type="binding site" evidence="1">
    <location>
        <begin position="59"/>
        <end position="63"/>
    </location>
    <ligand>
        <name>GTP</name>
        <dbReference type="ChEBI" id="CHEBI:37565"/>
    </ligand>
</feature>
<feature type="binding site" evidence="1">
    <location>
        <begin position="121"/>
        <end position="124"/>
    </location>
    <ligand>
        <name>GTP</name>
        <dbReference type="ChEBI" id="CHEBI:37565"/>
    </ligand>
</feature>
<gene>
    <name evidence="1" type="primary">era</name>
    <name type="ordered locus">SPG_0893</name>
</gene>
<organism>
    <name type="scientific">Streptococcus pneumoniae serotype 19F (strain G54)</name>
    <dbReference type="NCBI Taxonomy" id="512566"/>
    <lineage>
        <taxon>Bacteria</taxon>
        <taxon>Bacillati</taxon>
        <taxon>Bacillota</taxon>
        <taxon>Bacilli</taxon>
        <taxon>Lactobacillales</taxon>
        <taxon>Streptococcaceae</taxon>
        <taxon>Streptococcus</taxon>
    </lineage>
</organism>
<keyword id="KW-1003">Cell membrane</keyword>
<keyword id="KW-0963">Cytoplasm</keyword>
<keyword id="KW-0342">GTP-binding</keyword>
<keyword id="KW-0472">Membrane</keyword>
<keyword id="KW-0547">Nucleotide-binding</keyword>
<keyword id="KW-0690">Ribosome biogenesis</keyword>
<keyword id="KW-0694">RNA-binding</keyword>
<keyword id="KW-0699">rRNA-binding</keyword>
<name>ERA_STRP4</name>
<proteinExistence type="inferred from homology"/>
<evidence type="ECO:0000255" key="1">
    <source>
        <dbReference type="HAMAP-Rule" id="MF_00367"/>
    </source>
</evidence>
<evidence type="ECO:0000255" key="2">
    <source>
        <dbReference type="PROSITE-ProRule" id="PRU01050"/>
    </source>
</evidence>
<comment type="function">
    <text evidence="1">An essential GTPase that binds both GDP and GTP, with rapid nucleotide exchange. Plays a role in 16S rRNA processing and 30S ribosomal subunit biogenesis and possibly also in cell cycle regulation and energy metabolism.</text>
</comment>
<comment type="subunit">
    <text evidence="1">Monomer.</text>
</comment>
<comment type="subcellular location">
    <subcellularLocation>
        <location>Cytoplasm</location>
    </subcellularLocation>
    <subcellularLocation>
        <location evidence="1">Cell membrane</location>
        <topology evidence="1">Peripheral membrane protein</topology>
    </subcellularLocation>
</comment>
<comment type="similarity">
    <text evidence="1 2">Belongs to the TRAFAC class TrmE-Era-EngA-EngB-Septin-like GTPase superfamily. Era GTPase family.</text>
</comment>
<protein>
    <recommendedName>
        <fullName evidence="1">GTPase Era</fullName>
    </recommendedName>
</protein>
<reference key="1">
    <citation type="journal article" date="2001" name="Microb. Drug Resist.">
        <title>Annotated draft genomic sequence from a Streptococcus pneumoniae type 19F clinical isolate.</title>
        <authorList>
            <person name="Dopazo J."/>
            <person name="Mendoza A."/>
            <person name="Herrero J."/>
            <person name="Caldara F."/>
            <person name="Humbert Y."/>
            <person name="Friedli L."/>
            <person name="Guerrier M."/>
            <person name="Grand-Schenk E."/>
            <person name="Gandin C."/>
            <person name="de Francesco M."/>
            <person name="Polissi A."/>
            <person name="Buell G."/>
            <person name="Feger G."/>
            <person name="Garcia E."/>
            <person name="Peitsch M."/>
            <person name="Garcia-Bustos J.F."/>
        </authorList>
    </citation>
    <scope>NUCLEOTIDE SEQUENCE [LARGE SCALE GENOMIC DNA]</scope>
    <source>
        <strain>G54</strain>
    </source>
</reference>
<reference key="2">
    <citation type="submission" date="2008-03" db="EMBL/GenBank/DDBJ databases">
        <title>Pneumococcal beta glucoside metabolism investigated by whole genome comparison.</title>
        <authorList>
            <person name="Mulas L."/>
            <person name="Trappetti C."/>
            <person name="Hakenbeck R."/>
            <person name="Iannelli F."/>
            <person name="Pozzi G."/>
            <person name="Davidsen T.M."/>
            <person name="Tettelin H."/>
            <person name="Oggioni M."/>
        </authorList>
    </citation>
    <scope>NUCLEOTIDE SEQUENCE [LARGE SCALE GENOMIC DNA]</scope>
    <source>
        <strain>G54</strain>
    </source>
</reference>